<keyword id="KW-0012">Acyltransferase</keyword>
<keyword id="KW-0963">Cytoplasm</keyword>
<keyword id="KW-0275">Fatty acid biosynthesis</keyword>
<keyword id="KW-0276">Fatty acid metabolism</keyword>
<keyword id="KW-0444">Lipid biosynthesis</keyword>
<keyword id="KW-0443">Lipid metabolism</keyword>
<keyword id="KW-0511">Multifunctional enzyme</keyword>
<keyword id="KW-0808">Transferase</keyword>
<comment type="function">
    <text evidence="1">Catalyzes the condensation reaction of fatty acid synthesis by the addition to an acyl acceptor of two carbons from malonyl-ACP. Catalyzes the first condensation reaction which initiates fatty acid synthesis and may therefore play a role in governing the total rate of fatty acid production. Possesses both acetoacetyl-ACP synthase and acetyl transacylase activities. Its substrate specificity determines the biosynthesis of branched-chain and/or straight-chain of fatty acids.</text>
</comment>
<comment type="catalytic activity">
    <reaction evidence="1">
        <text>malonyl-[ACP] + acetyl-CoA + H(+) = 3-oxobutanoyl-[ACP] + CO2 + CoA</text>
        <dbReference type="Rhea" id="RHEA:12080"/>
        <dbReference type="Rhea" id="RHEA-COMP:9623"/>
        <dbReference type="Rhea" id="RHEA-COMP:9625"/>
        <dbReference type="ChEBI" id="CHEBI:15378"/>
        <dbReference type="ChEBI" id="CHEBI:16526"/>
        <dbReference type="ChEBI" id="CHEBI:57287"/>
        <dbReference type="ChEBI" id="CHEBI:57288"/>
        <dbReference type="ChEBI" id="CHEBI:78449"/>
        <dbReference type="ChEBI" id="CHEBI:78450"/>
        <dbReference type="EC" id="2.3.1.180"/>
    </reaction>
</comment>
<comment type="pathway">
    <text evidence="1">Lipid metabolism; fatty acid biosynthesis.</text>
</comment>
<comment type="subunit">
    <text evidence="1">Homodimer.</text>
</comment>
<comment type="subcellular location">
    <subcellularLocation>
        <location evidence="1">Cytoplasm</location>
    </subcellularLocation>
</comment>
<comment type="domain">
    <text evidence="1">The last Arg residue of the ACP-binding site is essential for the weak association between ACP/AcpP and FabH.</text>
</comment>
<comment type="similarity">
    <text evidence="1">Belongs to the thiolase-like superfamily. FabH family.</text>
</comment>
<feature type="chain" id="PRO_1000056341" description="Beta-ketoacyl-[acyl-carrier-protein] synthase III">
    <location>
        <begin position="1"/>
        <end position="327"/>
    </location>
</feature>
<feature type="region of interest" description="ACP-binding" evidence="1">
    <location>
        <begin position="254"/>
        <end position="258"/>
    </location>
</feature>
<feature type="active site" evidence="1">
    <location>
        <position position="112"/>
    </location>
</feature>
<feature type="active site" evidence="1">
    <location>
        <position position="253"/>
    </location>
</feature>
<feature type="active site" evidence="1">
    <location>
        <position position="283"/>
    </location>
</feature>
<organism>
    <name type="scientific">Chlamydia trachomatis serovar A (strain ATCC VR-571B / DSM 19440 / HAR-13)</name>
    <dbReference type="NCBI Taxonomy" id="315277"/>
    <lineage>
        <taxon>Bacteria</taxon>
        <taxon>Pseudomonadati</taxon>
        <taxon>Chlamydiota</taxon>
        <taxon>Chlamydiia</taxon>
        <taxon>Chlamydiales</taxon>
        <taxon>Chlamydiaceae</taxon>
        <taxon>Chlamydia/Chlamydophila group</taxon>
        <taxon>Chlamydia</taxon>
    </lineage>
</organism>
<reference key="1">
    <citation type="journal article" date="2005" name="Infect. Immun.">
        <title>Comparative genomic analysis of Chlamydia trachomatis oculotropic and genitotropic strains.</title>
        <authorList>
            <person name="Carlson J.H."/>
            <person name="Porcella S.F."/>
            <person name="McClarty G."/>
            <person name="Caldwell H.D."/>
        </authorList>
    </citation>
    <scope>NUCLEOTIDE SEQUENCE [LARGE SCALE GENOMIC DNA]</scope>
    <source>
        <strain>ATCC VR-571B / DSM 19440 / HAR-13</strain>
    </source>
</reference>
<dbReference type="EC" id="2.3.1.180" evidence="1"/>
<dbReference type="EMBL" id="CP000051">
    <property type="protein sequence ID" value="AAX50499.1"/>
    <property type="molecule type" value="Genomic_DNA"/>
</dbReference>
<dbReference type="RefSeq" id="WP_009871586.1">
    <property type="nucleotide sequence ID" value="NC_007429.1"/>
</dbReference>
<dbReference type="SMR" id="Q3KMC3"/>
<dbReference type="KEGG" id="cta:CTA_0261"/>
<dbReference type="HOGENOM" id="CLU_039592_3_1_0"/>
<dbReference type="UniPathway" id="UPA00094"/>
<dbReference type="Proteomes" id="UP000002532">
    <property type="component" value="Chromosome"/>
</dbReference>
<dbReference type="GO" id="GO:0005737">
    <property type="term" value="C:cytoplasm"/>
    <property type="evidence" value="ECO:0007669"/>
    <property type="project" value="UniProtKB-SubCell"/>
</dbReference>
<dbReference type="GO" id="GO:0004315">
    <property type="term" value="F:3-oxoacyl-[acyl-carrier-protein] synthase activity"/>
    <property type="evidence" value="ECO:0007669"/>
    <property type="project" value="InterPro"/>
</dbReference>
<dbReference type="GO" id="GO:0033818">
    <property type="term" value="F:beta-ketoacyl-acyl-carrier-protein synthase III activity"/>
    <property type="evidence" value="ECO:0007669"/>
    <property type="project" value="UniProtKB-UniRule"/>
</dbReference>
<dbReference type="GO" id="GO:0006633">
    <property type="term" value="P:fatty acid biosynthetic process"/>
    <property type="evidence" value="ECO:0007669"/>
    <property type="project" value="UniProtKB-UniRule"/>
</dbReference>
<dbReference type="GO" id="GO:0044550">
    <property type="term" value="P:secondary metabolite biosynthetic process"/>
    <property type="evidence" value="ECO:0007669"/>
    <property type="project" value="TreeGrafter"/>
</dbReference>
<dbReference type="CDD" id="cd00830">
    <property type="entry name" value="KAS_III"/>
    <property type="match status" value="1"/>
</dbReference>
<dbReference type="FunFam" id="3.40.47.10:FF:000004">
    <property type="entry name" value="3-oxoacyl-[acyl-carrier-protein] synthase 3"/>
    <property type="match status" value="1"/>
</dbReference>
<dbReference type="Gene3D" id="3.40.47.10">
    <property type="match status" value="1"/>
</dbReference>
<dbReference type="HAMAP" id="MF_01815">
    <property type="entry name" value="FabH"/>
    <property type="match status" value="1"/>
</dbReference>
<dbReference type="InterPro" id="IPR013747">
    <property type="entry name" value="ACP_syn_III_C"/>
</dbReference>
<dbReference type="InterPro" id="IPR013751">
    <property type="entry name" value="ACP_syn_III_N"/>
</dbReference>
<dbReference type="InterPro" id="IPR004655">
    <property type="entry name" value="FabH"/>
</dbReference>
<dbReference type="InterPro" id="IPR016039">
    <property type="entry name" value="Thiolase-like"/>
</dbReference>
<dbReference type="NCBIfam" id="TIGR00747">
    <property type="entry name" value="fabH"/>
    <property type="match status" value="1"/>
</dbReference>
<dbReference type="NCBIfam" id="NF006829">
    <property type="entry name" value="PRK09352.1"/>
    <property type="match status" value="1"/>
</dbReference>
<dbReference type="PANTHER" id="PTHR34069">
    <property type="entry name" value="3-OXOACYL-[ACYL-CARRIER-PROTEIN] SYNTHASE 3"/>
    <property type="match status" value="1"/>
</dbReference>
<dbReference type="PANTHER" id="PTHR34069:SF2">
    <property type="entry name" value="BETA-KETOACYL-[ACYL-CARRIER-PROTEIN] SYNTHASE III"/>
    <property type="match status" value="1"/>
</dbReference>
<dbReference type="Pfam" id="PF08545">
    <property type="entry name" value="ACP_syn_III"/>
    <property type="match status" value="1"/>
</dbReference>
<dbReference type="Pfam" id="PF08541">
    <property type="entry name" value="ACP_syn_III_C"/>
    <property type="match status" value="1"/>
</dbReference>
<dbReference type="SUPFAM" id="SSF53901">
    <property type="entry name" value="Thiolase-like"/>
    <property type="match status" value="1"/>
</dbReference>
<name>FABH_CHLTA</name>
<sequence>MRASIWGTGSYLPKKILTNADLEKIVETSDEWISTRTGIKERRIASAEEFSSFMGAKAAEKAIEAAKISKSQVDCIVFSTAAPDYIFPSSAALAQAYLGIKEIPAFDCLAACTGFLYGLSIAKAYVESGMYQCVLVIAADKLSSFVNYQDRNTCVLFGDGGSACIVGHSRPGALEISKVNLGADGKQGDLLRLPAGGSRCPASQDTVQNHQHFITMEGKEVFKHAVRRMEFAAKTCITEAGLQEKDIDWLVPHQANERIIDAIAKRFAVKDSRVFKTLAKYGNTAASSVGIALDELLRTHDIHVAERLLLVAFGGGLSWGAVILQQV</sequence>
<gene>
    <name evidence="1" type="primary">fabH</name>
    <name type="ordered locus">CTA_0261</name>
</gene>
<accession>Q3KMC3</accession>
<proteinExistence type="inferred from homology"/>
<protein>
    <recommendedName>
        <fullName evidence="1">Beta-ketoacyl-[acyl-carrier-protein] synthase III</fullName>
        <shortName evidence="1">Beta-ketoacyl-ACP synthase III</shortName>
        <shortName evidence="1">KAS III</shortName>
        <ecNumber evidence="1">2.3.1.180</ecNumber>
    </recommendedName>
    <alternativeName>
        <fullName evidence="1">3-oxoacyl-[acyl-carrier-protein] synthase 3</fullName>
    </alternativeName>
    <alternativeName>
        <fullName evidence="1">3-oxoacyl-[acyl-carrier-protein] synthase III</fullName>
    </alternativeName>
</protein>
<evidence type="ECO:0000255" key="1">
    <source>
        <dbReference type="HAMAP-Rule" id="MF_01815"/>
    </source>
</evidence>